<proteinExistence type="inferred from homology"/>
<gene>
    <name evidence="1" type="primary">minE</name>
    <name type="ordered locus">CLH_0554</name>
</gene>
<keyword id="KW-0131">Cell cycle</keyword>
<keyword id="KW-0132">Cell division</keyword>
<organism>
    <name type="scientific">Clostridium botulinum (strain Alaska E43 / Type E3)</name>
    <dbReference type="NCBI Taxonomy" id="508767"/>
    <lineage>
        <taxon>Bacteria</taxon>
        <taxon>Bacillati</taxon>
        <taxon>Bacillota</taxon>
        <taxon>Clostridia</taxon>
        <taxon>Eubacteriales</taxon>
        <taxon>Clostridiaceae</taxon>
        <taxon>Clostridium</taxon>
    </lineage>
</organism>
<reference key="1">
    <citation type="submission" date="2008-05" db="EMBL/GenBank/DDBJ databases">
        <title>Complete genome sequence of Clostridium botulinum E3 str. Alaska E43.</title>
        <authorList>
            <person name="Brinkac L.M."/>
            <person name="Brown J.L."/>
            <person name="Bruce D."/>
            <person name="Detter C."/>
            <person name="Munk C."/>
            <person name="Smith L.A."/>
            <person name="Smith T.J."/>
            <person name="Sutton G."/>
            <person name="Brettin T.S."/>
        </authorList>
    </citation>
    <scope>NUCLEOTIDE SEQUENCE [LARGE SCALE GENOMIC DNA]</scope>
    <source>
        <strain>Alaska E43 / Type E3</strain>
    </source>
</reference>
<accession>B2V097</accession>
<protein>
    <recommendedName>
        <fullName evidence="1">Cell division topological specificity factor</fullName>
    </recommendedName>
</protein>
<dbReference type="EMBL" id="CP001078">
    <property type="protein sequence ID" value="ACD52893.1"/>
    <property type="molecule type" value="Genomic_DNA"/>
</dbReference>
<dbReference type="RefSeq" id="WP_003374296.1">
    <property type="nucleotide sequence ID" value="NC_010723.1"/>
</dbReference>
<dbReference type="KEGG" id="cbt:CLH_0554"/>
<dbReference type="HOGENOM" id="CLU_137929_1_0_9"/>
<dbReference type="GO" id="GO:0051301">
    <property type="term" value="P:cell division"/>
    <property type="evidence" value="ECO:0007669"/>
    <property type="project" value="UniProtKB-KW"/>
</dbReference>
<dbReference type="GO" id="GO:0032955">
    <property type="term" value="P:regulation of division septum assembly"/>
    <property type="evidence" value="ECO:0007669"/>
    <property type="project" value="InterPro"/>
</dbReference>
<dbReference type="Gene3D" id="3.30.1070.10">
    <property type="entry name" value="Cell division topological specificity factor MinE"/>
    <property type="match status" value="1"/>
</dbReference>
<dbReference type="HAMAP" id="MF_00262">
    <property type="entry name" value="MinE"/>
    <property type="match status" value="1"/>
</dbReference>
<dbReference type="InterPro" id="IPR005527">
    <property type="entry name" value="MinE"/>
</dbReference>
<dbReference type="InterPro" id="IPR036707">
    <property type="entry name" value="MinE_sf"/>
</dbReference>
<dbReference type="NCBIfam" id="TIGR01215">
    <property type="entry name" value="minE"/>
    <property type="match status" value="1"/>
</dbReference>
<dbReference type="Pfam" id="PF03776">
    <property type="entry name" value="MinE"/>
    <property type="match status" value="1"/>
</dbReference>
<dbReference type="SUPFAM" id="SSF55229">
    <property type="entry name" value="Cell division protein MinE topological specificity domain"/>
    <property type="match status" value="1"/>
</dbReference>
<name>MINE_CLOBA</name>
<feature type="chain" id="PRO_1000114211" description="Cell division topological specificity factor">
    <location>
        <begin position="1"/>
        <end position="88"/>
    </location>
</feature>
<comment type="function">
    <text evidence="1">Prevents the cell division inhibition by proteins MinC and MinD at internal division sites while permitting inhibition at polar sites. This ensures cell division at the proper site by restricting the formation of a division septum at the midpoint of the long axis of the cell.</text>
</comment>
<comment type="similarity">
    <text evidence="1">Belongs to the MinE family.</text>
</comment>
<evidence type="ECO:0000255" key="1">
    <source>
        <dbReference type="HAMAP-Rule" id="MF_00262"/>
    </source>
</evidence>
<sequence>MGFFKGLSSRPTPKQVAKDRLKLILIHDRGEIPTDTLEKIRKEILGVISKYIEIQVDDVEISVNKSEDMEGENTSALIASIPIKSIRR</sequence>